<sequence length="477" mass="50413">MNKDQQLAHHILDAVGGIDNVDNIIHCMTRVRLKINNETQVDYPKLKNIEGVLGVIQDERLQIVVGPGTVNEVSAEMVKLSGVQLGEDIPHRSNTSNIKNQAQQNKREFQQKRKQSKMNTILKSIANIFIPLIPAFIGAGLIGGIAAVLNNFITAGTISADWVKQLVAVLNVIKDGMLAYLAIFTGFNAAKVFGATPGLGGVIGGTTLLTGITEDNPIKNVFTGEPLIAGQGGIIGVILAVWLLSIIEKKLHKIVPNAIDIIVTPTISLLIIGLLTIFFFMPIAGFISDGLVGVVNWVIGVGGIFSGFIIGAFFLPLVMLGLHHIFTPIHIELINQSGATYLLPIAAMAGAGQVGAALALWVRCKNNTTLRTAIKGALPVGFLGIGEPLIYGVTLPLGRPFITACLGGGIGGAVIGGIGHIGATAIGPSGISLLPLIAHQKYLGYIIGLLSAYLAGFIFTYFFGTTKEMRNLNKLGD</sequence>
<feature type="chain" id="PRO_0000272183" description="PTS system MurNAc-GlcNAc-specific EIIBC component">
    <location>
        <begin position="1"/>
        <end position="477"/>
    </location>
</feature>
<feature type="transmembrane region" description="Helical" evidence="3">
    <location>
        <begin position="128"/>
        <end position="148"/>
    </location>
</feature>
<feature type="transmembrane region" description="Helical" evidence="3">
    <location>
        <begin position="167"/>
        <end position="187"/>
    </location>
</feature>
<feature type="transmembrane region" description="Helical" evidence="3">
    <location>
        <begin position="192"/>
        <end position="212"/>
    </location>
</feature>
<feature type="transmembrane region" description="Helical" evidence="3">
    <location>
        <begin position="227"/>
        <end position="247"/>
    </location>
</feature>
<feature type="transmembrane region" description="Helical" evidence="3">
    <location>
        <begin position="267"/>
        <end position="287"/>
    </location>
</feature>
<feature type="transmembrane region" description="Helical" evidence="3">
    <location>
        <begin position="298"/>
        <end position="318"/>
    </location>
</feature>
<feature type="transmembrane region" description="Helical" evidence="3">
    <location>
        <begin position="342"/>
        <end position="362"/>
    </location>
</feature>
<feature type="transmembrane region" description="Helical" evidence="3">
    <location>
        <begin position="377"/>
        <end position="397"/>
    </location>
</feature>
<feature type="transmembrane region" description="Helical" evidence="3">
    <location>
        <begin position="401"/>
        <end position="421"/>
    </location>
</feature>
<feature type="transmembrane region" description="Helical" evidence="3">
    <location>
        <begin position="443"/>
        <end position="463"/>
    </location>
</feature>
<feature type="domain" description="PTS EIIB type-1" evidence="2">
    <location>
        <begin position="5"/>
        <end position="87"/>
    </location>
</feature>
<feature type="domain" description="PTS EIIC type-1" evidence="3">
    <location>
        <begin position="123"/>
        <end position="477"/>
    </location>
</feature>
<feature type="region of interest" description="Disordered" evidence="4">
    <location>
        <begin position="91"/>
        <end position="113"/>
    </location>
</feature>
<feature type="compositionally biased region" description="Polar residues" evidence="4">
    <location>
        <begin position="92"/>
        <end position="104"/>
    </location>
</feature>
<feature type="active site" description="Phosphocysteine intermediate; for EIIB activity" evidence="2">
    <location>
        <position position="27"/>
    </location>
</feature>
<comment type="function">
    <text evidence="1">The phosphoenolpyruvate-dependent sugar phosphotransferase system (sugar PTS), a major carbohydrate active transport system, catalyzes the phosphorylation of incoming sugar substrates concomitantly with their translocation across the cell membrane. This system is involved in the uptake and phosphorylation of MurNAc-GlcNAc, the principle peptidoglycan turnover product of S.aureus, yielding cytoplasmic MurNAc 6P-GlcNAc.</text>
</comment>
<comment type="catalytic activity">
    <reaction evidence="1">
        <text>N-acetyl-beta-D-muramate-(1-&gt;4)-N-acetyl-D-glucosamine(out) + N(pros)-phospho-L-histidyl-[protein] = 6-phospho-N-acetyl-beta-D-muramate-(1-&gt;4)-N-acetyl-D-glucosamine(in) + L-histidyl-[protein]</text>
        <dbReference type="Rhea" id="RHEA:66784"/>
        <dbReference type="Rhea" id="RHEA-COMP:9745"/>
        <dbReference type="Rhea" id="RHEA-COMP:9746"/>
        <dbReference type="ChEBI" id="CHEBI:29979"/>
        <dbReference type="ChEBI" id="CHEBI:64837"/>
        <dbReference type="ChEBI" id="CHEBI:167476"/>
        <dbReference type="ChEBI" id="CHEBI:167477"/>
    </reaction>
    <physiologicalReaction direction="left-to-right" evidence="1">
        <dbReference type="Rhea" id="RHEA:66785"/>
    </physiologicalReaction>
</comment>
<comment type="pathway">
    <text evidence="1">Cell wall biogenesis; peptidoglycan recycling.</text>
</comment>
<comment type="subcellular location">
    <subcellularLocation>
        <location evidence="3">Cell membrane</location>
        <topology evidence="3">Multi-pass membrane protein</topology>
    </subcellularLocation>
</comment>
<comment type="domain">
    <text>The EIIB domain is phosphorylated by phospho-EIIA on a cysteinyl or histidyl residue, depending on the transported sugar. Then, it transfers the phosphoryl group to the sugar substrate concomitantly with the sugar uptake processed by the EIIC domain.</text>
</comment>
<comment type="domain">
    <text>The EIIC domain forms the PTS system translocation channel and contains the specific substrate-binding site.</text>
</comment>
<reference key="1">
    <citation type="journal article" date="2005" name="J. Bacteriol.">
        <title>Whole-genome sequencing of Staphylococcus haemolyticus uncovers the extreme plasticity of its genome and the evolution of human-colonizing staphylococcal species.</title>
        <authorList>
            <person name="Takeuchi F."/>
            <person name="Watanabe S."/>
            <person name="Baba T."/>
            <person name="Yuzawa H."/>
            <person name="Ito T."/>
            <person name="Morimoto Y."/>
            <person name="Kuroda M."/>
            <person name="Cui L."/>
            <person name="Takahashi M."/>
            <person name="Ankai A."/>
            <person name="Baba S."/>
            <person name="Fukui S."/>
            <person name="Lee J.C."/>
            <person name="Hiramatsu K."/>
        </authorList>
    </citation>
    <scope>NUCLEOTIDE SEQUENCE [LARGE SCALE GENOMIC DNA]</scope>
    <source>
        <strain>JCSC1435</strain>
    </source>
</reference>
<organism>
    <name type="scientific">Staphylococcus haemolyticus (strain JCSC1435)</name>
    <dbReference type="NCBI Taxonomy" id="279808"/>
    <lineage>
        <taxon>Bacteria</taxon>
        <taxon>Bacillati</taxon>
        <taxon>Bacillota</taxon>
        <taxon>Bacilli</taxon>
        <taxon>Bacillales</taxon>
        <taxon>Staphylococcaceae</taxon>
        <taxon>Staphylococcus</taxon>
    </lineage>
</organism>
<keyword id="KW-1003">Cell membrane</keyword>
<keyword id="KW-0418">Kinase</keyword>
<keyword id="KW-0472">Membrane</keyword>
<keyword id="KW-0598">Phosphotransferase system</keyword>
<keyword id="KW-0762">Sugar transport</keyword>
<keyword id="KW-0808">Transferase</keyword>
<keyword id="KW-0812">Transmembrane</keyword>
<keyword id="KW-1133">Transmembrane helix</keyword>
<keyword id="KW-0813">Transport</keyword>
<gene>
    <name type="ordered locus">SH0741</name>
</gene>
<evidence type="ECO:0000250" key="1">
    <source>
        <dbReference type="UniProtKB" id="Q2FK70"/>
    </source>
</evidence>
<evidence type="ECO:0000255" key="2">
    <source>
        <dbReference type="PROSITE-ProRule" id="PRU00421"/>
    </source>
</evidence>
<evidence type="ECO:0000255" key="3">
    <source>
        <dbReference type="PROSITE-ProRule" id="PRU00426"/>
    </source>
</evidence>
<evidence type="ECO:0000256" key="4">
    <source>
        <dbReference type="SAM" id="MobiDB-lite"/>
    </source>
</evidence>
<name>PTXBC_STAHJ</name>
<accession>Q4L8H5</accession>
<dbReference type="EC" id="2.7.1.-" evidence="1"/>
<dbReference type="EMBL" id="AP006716">
    <property type="protein sequence ID" value="BAE04050.1"/>
    <property type="molecule type" value="Genomic_DNA"/>
</dbReference>
<dbReference type="RefSeq" id="WP_011275065.1">
    <property type="nucleotide sequence ID" value="NC_007168.1"/>
</dbReference>
<dbReference type="SMR" id="Q4L8H5"/>
<dbReference type="KEGG" id="sha:SH0741"/>
<dbReference type="eggNOG" id="COG1263">
    <property type="taxonomic scope" value="Bacteria"/>
</dbReference>
<dbReference type="eggNOG" id="COG1264">
    <property type="taxonomic scope" value="Bacteria"/>
</dbReference>
<dbReference type="HOGENOM" id="CLU_012312_2_0_9"/>
<dbReference type="OrthoDB" id="9769191at2"/>
<dbReference type="UniPathway" id="UPA00544"/>
<dbReference type="Proteomes" id="UP000000543">
    <property type="component" value="Chromosome"/>
</dbReference>
<dbReference type="GO" id="GO:0005886">
    <property type="term" value="C:plasma membrane"/>
    <property type="evidence" value="ECO:0007669"/>
    <property type="project" value="UniProtKB-SubCell"/>
</dbReference>
<dbReference type="GO" id="GO:0016301">
    <property type="term" value="F:kinase activity"/>
    <property type="evidence" value="ECO:0007669"/>
    <property type="project" value="UniProtKB-KW"/>
</dbReference>
<dbReference type="GO" id="GO:0008982">
    <property type="term" value="F:protein-N(PI)-phosphohistidine-sugar phosphotransferase activity"/>
    <property type="evidence" value="ECO:0007669"/>
    <property type="project" value="InterPro"/>
</dbReference>
<dbReference type="GO" id="GO:0090588">
    <property type="term" value="F:protein-phosphocysteine-N-acetylmuramate phosphotransferase system transporter activity"/>
    <property type="evidence" value="ECO:0007669"/>
    <property type="project" value="TreeGrafter"/>
</dbReference>
<dbReference type="GO" id="GO:0009254">
    <property type="term" value="P:peptidoglycan turnover"/>
    <property type="evidence" value="ECO:0007669"/>
    <property type="project" value="UniProtKB-UniPathway"/>
</dbReference>
<dbReference type="GO" id="GO:0009401">
    <property type="term" value="P:phosphoenolpyruvate-dependent sugar phosphotransferase system"/>
    <property type="evidence" value="ECO:0007669"/>
    <property type="project" value="UniProtKB-KW"/>
</dbReference>
<dbReference type="CDD" id="cd00212">
    <property type="entry name" value="PTS_IIB_glc"/>
    <property type="match status" value="1"/>
</dbReference>
<dbReference type="FunFam" id="3.30.1360.60:FF:000001">
    <property type="entry name" value="PTS system glucose-specific IIBC component PtsG"/>
    <property type="match status" value="1"/>
</dbReference>
<dbReference type="Gene3D" id="3.30.1360.60">
    <property type="entry name" value="Glucose permease domain IIB"/>
    <property type="match status" value="1"/>
</dbReference>
<dbReference type="InterPro" id="IPR036878">
    <property type="entry name" value="Glu_permease_IIB"/>
</dbReference>
<dbReference type="InterPro" id="IPR018113">
    <property type="entry name" value="PTrfase_EIIB_Cys"/>
</dbReference>
<dbReference type="InterPro" id="IPR003352">
    <property type="entry name" value="PTS_EIIC"/>
</dbReference>
<dbReference type="InterPro" id="IPR013013">
    <property type="entry name" value="PTS_EIIC_1"/>
</dbReference>
<dbReference type="InterPro" id="IPR001996">
    <property type="entry name" value="PTS_IIB_1"/>
</dbReference>
<dbReference type="InterPro" id="IPR050558">
    <property type="entry name" value="PTS_Sugar-Specific_Components"/>
</dbReference>
<dbReference type="PANTHER" id="PTHR30175">
    <property type="entry name" value="PHOSPHOTRANSFERASE SYSTEM TRANSPORT PROTEIN"/>
    <property type="match status" value="1"/>
</dbReference>
<dbReference type="PANTHER" id="PTHR30175:SF3">
    <property type="entry name" value="PTS SYSTEM N-ACETYLMURAMIC ACID-SPECIFIC EIIBC COMPONENT"/>
    <property type="match status" value="1"/>
</dbReference>
<dbReference type="Pfam" id="PF00367">
    <property type="entry name" value="PTS_EIIB"/>
    <property type="match status" value="1"/>
</dbReference>
<dbReference type="Pfam" id="PF02378">
    <property type="entry name" value="PTS_EIIC"/>
    <property type="match status" value="1"/>
</dbReference>
<dbReference type="SUPFAM" id="SSF55604">
    <property type="entry name" value="Glucose permease domain IIB"/>
    <property type="match status" value="1"/>
</dbReference>
<dbReference type="PROSITE" id="PS51098">
    <property type="entry name" value="PTS_EIIB_TYPE_1"/>
    <property type="match status" value="1"/>
</dbReference>
<dbReference type="PROSITE" id="PS01035">
    <property type="entry name" value="PTS_EIIB_TYPE_1_CYS"/>
    <property type="match status" value="1"/>
</dbReference>
<dbReference type="PROSITE" id="PS51103">
    <property type="entry name" value="PTS_EIIC_TYPE_1"/>
    <property type="match status" value="1"/>
</dbReference>
<protein>
    <recommendedName>
        <fullName evidence="1">PTS system MurNAc-GlcNAc-specific EIIBC component</fullName>
    </recommendedName>
    <domain>
        <recommendedName>
            <fullName>MurNAc-GlcNAc-specific phosphotransferase enzyme IIB component</fullName>
            <ecNumber evidence="1">2.7.1.-</ecNumber>
        </recommendedName>
        <alternativeName>
            <fullName>PTS system MurNAc-GlcNAc-specific EIIB component</fullName>
        </alternativeName>
    </domain>
    <domain>
        <recommendedName>
            <fullName>MurNAc-GlcNAc permease IIC component</fullName>
        </recommendedName>
        <alternativeName>
            <fullName>PTS system MurNAc-GlcNAc-specific EIIC component</fullName>
        </alternativeName>
    </domain>
</protein>
<proteinExistence type="inferred from homology"/>